<sequence length="292" mass="32167">MNKPFNCIGIVGHPRHPTALATHEMLYHWLTEKGYSVLIEQQIARELNLKDAPTGSLADIGQQADLAVVVGGDGNMLGAARVLSRYDIKVIGVNRGNLGFLTDLDPDHAQQQLSDVLDGHYLSEQRFMLEAHVCRTNQPDSISTAINEVVLHPGKVAHMIEFEVYIDDRFAFSQRSDGLIIATPTGSTAYSLSAGGPILTPSLEAIALVPMFPHTLSARPLVINSSSTIRLKFSCITNDLEISCDSQIALPVQEGEEVLIRRSEHHLNLIHPKNYSYFNTLSSKLGWSKKLF</sequence>
<dbReference type="EC" id="2.7.1.23" evidence="1"/>
<dbReference type="EMBL" id="BX950851">
    <property type="protein sequence ID" value="CAG73754.1"/>
    <property type="molecule type" value="Genomic_DNA"/>
</dbReference>
<dbReference type="RefSeq" id="WP_011092446.1">
    <property type="nucleotide sequence ID" value="NC_004547.2"/>
</dbReference>
<dbReference type="SMR" id="Q6D8Y0"/>
<dbReference type="STRING" id="218491.ECA0841"/>
<dbReference type="GeneID" id="57207586"/>
<dbReference type="KEGG" id="eca:ECA0841"/>
<dbReference type="PATRIC" id="fig|218491.5.peg.842"/>
<dbReference type="eggNOG" id="COG0061">
    <property type="taxonomic scope" value="Bacteria"/>
</dbReference>
<dbReference type="HOGENOM" id="CLU_008831_0_1_6"/>
<dbReference type="OrthoDB" id="9774737at2"/>
<dbReference type="Proteomes" id="UP000007966">
    <property type="component" value="Chromosome"/>
</dbReference>
<dbReference type="GO" id="GO:0005737">
    <property type="term" value="C:cytoplasm"/>
    <property type="evidence" value="ECO:0007669"/>
    <property type="project" value="UniProtKB-SubCell"/>
</dbReference>
<dbReference type="GO" id="GO:0005524">
    <property type="term" value="F:ATP binding"/>
    <property type="evidence" value="ECO:0007669"/>
    <property type="project" value="UniProtKB-KW"/>
</dbReference>
<dbReference type="GO" id="GO:0046872">
    <property type="term" value="F:metal ion binding"/>
    <property type="evidence" value="ECO:0007669"/>
    <property type="project" value="UniProtKB-UniRule"/>
</dbReference>
<dbReference type="GO" id="GO:0051287">
    <property type="term" value="F:NAD binding"/>
    <property type="evidence" value="ECO:0007669"/>
    <property type="project" value="UniProtKB-ARBA"/>
</dbReference>
<dbReference type="GO" id="GO:0003951">
    <property type="term" value="F:NAD+ kinase activity"/>
    <property type="evidence" value="ECO:0007669"/>
    <property type="project" value="UniProtKB-UniRule"/>
</dbReference>
<dbReference type="GO" id="GO:0019674">
    <property type="term" value="P:NAD metabolic process"/>
    <property type="evidence" value="ECO:0007669"/>
    <property type="project" value="InterPro"/>
</dbReference>
<dbReference type="GO" id="GO:0006741">
    <property type="term" value="P:NADP biosynthetic process"/>
    <property type="evidence" value="ECO:0007669"/>
    <property type="project" value="UniProtKB-UniRule"/>
</dbReference>
<dbReference type="FunFam" id="2.60.200.30:FF:000001">
    <property type="entry name" value="NAD kinase"/>
    <property type="match status" value="1"/>
</dbReference>
<dbReference type="FunFam" id="3.40.50.10330:FF:000004">
    <property type="entry name" value="NAD kinase"/>
    <property type="match status" value="1"/>
</dbReference>
<dbReference type="Gene3D" id="3.40.50.10330">
    <property type="entry name" value="Probable inorganic polyphosphate/atp-NAD kinase, domain 1"/>
    <property type="match status" value="1"/>
</dbReference>
<dbReference type="Gene3D" id="2.60.200.30">
    <property type="entry name" value="Probable inorganic polyphosphate/atp-NAD kinase, domain 2"/>
    <property type="match status" value="1"/>
</dbReference>
<dbReference type="HAMAP" id="MF_00361">
    <property type="entry name" value="NAD_kinase"/>
    <property type="match status" value="1"/>
</dbReference>
<dbReference type="InterPro" id="IPR017438">
    <property type="entry name" value="ATP-NAD_kinase_N"/>
</dbReference>
<dbReference type="InterPro" id="IPR017437">
    <property type="entry name" value="ATP-NAD_kinase_PpnK-typ_C"/>
</dbReference>
<dbReference type="InterPro" id="IPR016064">
    <property type="entry name" value="NAD/diacylglycerol_kinase_sf"/>
</dbReference>
<dbReference type="InterPro" id="IPR002504">
    <property type="entry name" value="NADK"/>
</dbReference>
<dbReference type="NCBIfam" id="NF002306">
    <property type="entry name" value="PRK01231.1"/>
    <property type="match status" value="1"/>
</dbReference>
<dbReference type="NCBIfam" id="NF002893">
    <property type="entry name" value="PRK03378.1"/>
    <property type="match status" value="1"/>
</dbReference>
<dbReference type="PANTHER" id="PTHR20275">
    <property type="entry name" value="NAD KINASE"/>
    <property type="match status" value="1"/>
</dbReference>
<dbReference type="PANTHER" id="PTHR20275:SF0">
    <property type="entry name" value="NAD KINASE"/>
    <property type="match status" value="1"/>
</dbReference>
<dbReference type="Pfam" id="PF01513">
    <property type="entry name" value="NAD_kinase"/>
    <property type="match status" value="1"/>
</dbReference>
<dbReference type="Pfam" id="PF20143">
    <property type="entry name" value="NAD_kinase_C"/>
    <property type="match status" value="1"/>
</dbReference>
<dbReference type="SUPFAM" id="SSF111331">
    <property type="entry name" value="NAD kinase/diacylglycerol kinase-like"/>
    <property type="match status" value="1"/>
</dbReference>
<protein>
    <recommendedName>
        <fullName evidence="1">NAD kinase</fullName>
        <ecNumber evidence="1">2.7.1.23</ecNumber>
    </recommendedName>
    <alternativeName>
        <fullName evidence="1">ATP-dependent NAD kinase</fullName>
    </alternativeName>
</protein>
<reference key="1">
    <citation type="journal article" date="2004" name="Proc. Natl. Acad. Sci. U.S.A.">
        <title>Genome sequence of the enterobacterial phytopathogen Erwinia carotovora subsp. atroseptica and characterization of virulence factors.</title>
        <authorList>
            <person name="Bell K.S."/>
            <person name="Sebaihia M."/>
            <person name="Pritchard L."/>
            <person name="Holden M.T.G."/>
            <person name="Hyman L.J."/>
            <person name="Holeva M.C."/>
            <person name="Thomson N.R."/>
            <person name="Bentley S.D."/>
            <person name="Churcher L.J.C."/>
            <person name="Mungall K."/>
            <person name="Atkin R."/>
            <person name="Bason N."/>
            <person name="Brooks K."/>
            <person name="Chillingworth T."/>
            <person name="Clark K."/>
            <person name="Doggett J."/>
            <person name="Fraser A."/>
            <person name="Hance Z."/>
            <person name="Hauser H."/>
            <person name="Jagels K."/>
            <person name="Moule S."/>
            <person name="Norbertczak H."/>
            <person name="Ormond D."/>
            <person name="Price C."/>
            <person name="Quail M.A."/>
            <person name="Sanders M."/>
            <person name="Walker D."/>
            <person name="Whitehead S."/>
            <person name="Salmond G.P.C."/>
            <person name="Birch P.R.J."/>
            <person name="Parkhill J."/>
            <person name="Toth I.K."/>
        </authorList>
    </citation>
    <scope>NUCLEOTIDE SEQUENCE [LARGE SCALE GENOMIC DNA]</scope>
    <source>
        <strain>SCRI 1043 / ATCC BAA-672</strain>
    </source>
</reference>
<name>NADK_PECAS</name>
<feature type="chain" id="PRO_0000229635" description="NAD kinase">
    <location>
        <begin position="1"/>
        <end position="292"/>
    </location>
</feature>
<feature type="active site" description="Proton acceptor" evidence="1">
    <location>
        <position position="73"/>
    </location>
</feature>
<feature type="binding site" evidence="1">
    <location>
        <begin position="73"/>
        <end position="74"/>
    </location>
    <ligand>
        <name>NAD(+)</name>
        <dbReference type="ChEBI" id="CHEBI:57540"/>
    </ligand>
</feature>
<feature type="binding site" evidence="1">
    <location>
        <begin position="147"/>
        <end position="148"/>
    </location>
    <ligand>
        <name>NAD(+)</name>
        <dbReference type="ChEBI" id="CHEBI:57540"/>
    </ligand>
</feature>
<feature type="binding site" evidence="1">
    <location>
        <position position="158"/>
    </location>
    <ligand>
        <name>NAD(+)</name>
        <dbReference type="ChEBI" id="CHEBI:57540"/>
    </ligand>
</feature>
<feature type="binding site" evidence="1">
    <location>
        <position position="175"/>
    </location>
    <ligand>
        <name>NAD(+)</name>
        <dbReference type="ChEBI" id="CHEBI:57540"/>
    </ligand>
</feature>
<feature type="binding site" evidence="1">
    <location>
        <position position="177"/>
    </location>
    <ligand>
        <name>NAD(+)</name>
        <dbReference type="ChEBI" id="CHEBI:57540"/>
    </ligand>
</feature>
<feature type="binding site" evidence="1">
    <location>
        <begin position="188"/>
        <end position="193"/>
    </location>
    <ligand>
        <name>NAD(+)</name>
        <dbReference type="ChEBI" id="CHEBI:57540"/>
    </ligand>
</feature>
<feature type="binding site" evidence="1">
    <location>
        <position position="247"/>
    </location>
    <ligand>
        <name>NAD(+)</name>
        <dbReference type="ChEBI" id="CHEBI:57540"/>
    </ligand>
</feature>
<gene>
    <name evidence="1" type="primary">nadK</name>
    <name type="ordered locus">ECA0841</name>
</gene>
<comment type="function">
    <text evidence="1">Involved in the regulation of the intracellular balance of NAD and NADP, and is a key enzyme in the biosynthesis of NADP. Catalyzes specifically the phosphorylation on 2'-hydroxyl of the adenosine moiety of NAD to yield NADP.</text>
</comment>
<comment type="catalytic activity">
    <reaction evidence="1">
        <text>NAD(+) + ATP = ADP + NADP(+) + H(+)</text>
        <dbReference type="Rhea" id="RHEA:18629"/>
        <dbReference type="ChEBI" id="CHEBI:15378"/>
        <dbReference type="ChEBI" id="CHEBI:30616"/>
        <dbReference type="ChEBI" id="CHEBI:57540"/>
        <dbReference type="ChEBI" id="CHEBI:58349"/>
        <dbReference type="ChEBI" id="CHEBI:456216"/>
        <dbReference type="EC" id="2.7.1.23"/>
    </reaction>
</comment>
<comment type="cofactor">
    <cofactor evidence="1">
        <name>a divalent metal cation</name>
        <dbReference type="ChEBI" id="CHEBI:60240"/>
    </cofactor>
</comment>
<comment type="subcellular location">
    <subcellularLocation>
        <location evidence="1">Cytoplasm</location>
    </subcellularLocation>
</comment>
<comment type="similarity">
    <text evidence="1">Belongs to the NAD kinase family.</text>
</comment>
<proteinExistence type="inferred from homology"/>
<organism>
    <name type="scientific">Pectobacterium atrosepticum (strain SCRI 1043 / ATCC BAA-672)</name>
    <name type="common">Erwinia carotovora subsp. atroseptica</name>
    <dbReference type="NCBI Taxonomy" id="218491"/>
    <lineage>
        <taxon>Bacteria</taxon>
        <taxon>Pseudomonadati</taxon>
        <taxon>Pseudomonadota</taxon>
        <taxon>Gammaproteobacteria</taxon>
        <taxon>Enterobacterales</taxon>
        <taxon>Pectobacteriaceae</taxon>
        <taxon>Pectobacterium</taxon>
    </lineage>
</organism>
<evidence type="ECO:0000255" key="1">
    <source>
        <dbReference type="HAMAP-Rule" id="MF_00361"/>
    </source>
</evidence>
<keyword id="KW-0067">ATP-binding</keyword>
<keyword id="KW-0963">Cytoplasm</keyword>
<keyword id="KW-0418">Kinase</keyword>
<keyword id="KW-0520">NAD</keyword>
<keyword id="KW-0521">NADP</keyword>
<keyword id="KW-0547">Nucleotide-binding</keyword>
<keyword id="KW-1185">Reference proteome</keyword>
<keyword id="KW-0808">Transferase</keyword>
<accession>Q6D8Y0</accession>